<reference key="1">
    <citation type="journal article" date="2004" name="Science">
        <title>The Ashbya gossypii genome as a tool for mapping the ancient Saccharomyces cerevisiae genome.</title>
        <authorList>
            <person name="Dietrich F.S."/>
            <person name="Voegeli S."/>
            <person name="Brachat S."/>
            <person name="Lerch A."/>
            <person name="Gates K."/>
            <person name="Steiner S."/>
            <person name="Mohr C."/>
            <person name="Poehlmann R."/>
            <person name="Luedi P."/>
            <person name="Choi S."/>
            <person name="Wing R.A."/>
            <person name="Flavier A."/>
            <person name="Gaffney T.D."/>
            <person name="Philippsen P."/>
        </authorList>
    </citation>
    <scope>NUCLEOTIDE SEQUENCE [LARGE SCALE GENOMIC DNA]</scope>
    <source>
        <strain>ATCC 10895 / CBS 109.51 / FGSC 9923 / NRRL Y-1056</strain>
    </source>
</reference>
<reference key="2">
    <citation type="journal article" date="2013" name="G3 (Bethesda)">
        <title>Genomes of Ashbya fungi isolated from insects reveal four mating-type loci, numerous translocations, lack of transposons, and distinct gene duplications.</title>
        <authorList>
            <person name="Dietrich F.S."/>
            <person name="Voegeli S."/>
            <person name="Kuo S."/>
            <person name="Philippsen P."/>
        </authorList>
    </citation>
    <scope>GENOME REANNOTATION</scope>
    <source>
        <strain>ATCC 10895 / CBS 109.51 / FGSC 9923 / NRRL Y-1056</strain>
    </source>
</reference>
<name>ANT1_EREGS</name>
<gene>
    <name type="primary">ANT1</name>
    <name type="ordered locus">ADR036C</name>
</gene>
<dbReference type="EMBL" id="AE016817">
    <property type="protein sequence ID" value="AAS51956.1"/>
    <property type="molecule type" value="Genomic_DNA"/>
</dbReference>
<dbReference type="RefSeq" id="NP_984132.1">
    <property type="nucleotide sequence ID" value="NM_209485.1"/>
</dbReference>
<dbReference type="SMR" id="Q75A82"/>
<dbReference type="FunCoup" id="Q75A82">
    <property type="interactions" value="63"/>
</dbReference>
<dbReference type="STRING" id="284811.Q75A82"/>
<dbReference type="EnsemblFungi" id="AAS51956">
    <property type="protein sequence ID" value="AAS51956"/>
    <property type="gene ID" value="AGOS_ADR036C"/>
</dbReference>
<dbReference type="GeneID" id="4620281"/>
<dbReference type="KEGG" id="ago:AGOS_ADR036C"/>
<dbReference type="eggNOG" id="KOG0769">
    <property type="taxonomic scope" value="Eukaryota"/>
</dbReference>
<dbReference type="HOGENOM" id="CLU_015166_6_3_1"/>
<dbReference type="InParanoid" id="Q75A82"/>
<dbReference type="OMA" id="PLEMINT"/>
<dbReference type="OrthoDB" id="446044at2759"/>
<dbReference type="Proteomes" id="UP000000591">
    <property type="component" value="Chromosome IV"/>
</dbReference>
<dbReference type="GO" id="GO:0005778">
    <property type="term" value="C:peroxisomal membrane"/>
    <property type="evidence" value="ECO:0000318"/>
    <property type="project" value="GO_Central"/>
</dbReference>
<dbReference type="GO" id="GO:0015217">
    <property type="term" value="F:ADP transmembrane transporter activity"/>
    <property type="evidence" value="ECO:0000318"/>
    <property type="project" value="GO_Central"/>
</dbReference>
<dbReference type="GO" id="GO:0005347">
    <property type="term" value="F:ATP transmembrane transporter activity"/>
    <property type="evidence" value="ECO:0000318"/>
    <property type="project" value="GO_Central"/>
</dbReference>
<dbReference type="GO" id="GO:0015866">
    <property type="term" value="P:ADP transport"/>
    <property type="evidence" value="ECO:0000318"/>
    <property type="project" value="GO_Central"/>
</dbReference>
<dbReference type="GO" id="GO:0015867">
    <property type="term" value="P:ATP transport"/>
    <property type="evidence" value="ECO:0000318"/>
    <property type="project" value="GO_Central"/>
</dbReference>
<dbReference type="GO" id="GO:0006635">
    <property type="term" value="P:fatty acid beta-oxidation"/>
    <property type="evidence" value="ECO:0000318"/>
    <property type="project" value="GO_Central"/>
</dbReference>
<dbReference type="GO" id="GO:0007031">
    <property type="term" value="P:peroxisome organization"/>
    <property type="evidence" value="ECO:0000318"/>
    <property type="project" value="GO_Central"/>
</dbReference>
<dbReference type="GO" id="GO:1902600">
    <property type="term" value="P:proton transmembrane transport"/>
    <property type="evidence" value="ECO:0007669"/>
    <property type="project" value="UniProtKB-KW"/>
</dbReference>
<dbReference type="FunFam" id="1.50.40.10:FF:000135">
    <property type="entry name" value="Adenine nucleotide transporter"/>
    <property type="match status" value="1"/>
</dbReference>
<dbReference type="Gene3D" id="1.50.40.10">
    <property type="entry name" value="Mitochondrial carrier domain"/>
    <property type="match status" value="1"/>
</dbReference>
<dbReference type="InterPro" id="IPR018108">
    <property type="entry name" value="Mitochondrial_sb/sol_carrier"/>
</dbReference>
<dbReference type="InterPro" id="IPR023395">
    <property type="entry name" value="Mt_carrier_dom_sf"/>
</dbReference>
<dbReference type="InterPro" id="IPR045900">
    <property type="entry name" value="Peroxisomal_Ade_carrier"/>
</dbReference>
<dbReference type="PANTHER" id="PTHR46650">
    <property type="entry name" value="PEROXISOMAL ADENINE NUCLEOTIDE TRANSPORTER 1"/>
    <property type="match status" value="1"/>
</dbReference>
<dbReference type="PANTHER" id="PTHR46650:SF1">
    <property type="entry name" value="PEROXISOMAL ADENINE NUCLEOTIDE TRANSPORTER 1"/>
    <property type="match status" value="1"/>
</dbReference>
<dbReference type="Pfam" id="PF00153">
    <property type="entry name" value="Mito_carr"/>
    <property type="match status" value="3"/>
</dbReference>
<dbReference type="SUPFAM" id="SSF103506">
    <property type="entry name" value="Mitochondrial carrier"/>
    <property type="match status" value="1"/>
</dbReference>
<dbReference type="PROSITE" id="PS50920">
    <property type="entry name" value="SOLCAR"/>
    <property type="match status" value="3"/>
</dbReference>
<accession>Q75A82</accession>
<comment type="function">
    <text evidence="1">Adenine nucleotide transporter involved in the uniport of ATP and adenine nucleotide hetero-exchange transport between the cytosol and the peroxisomal lumen. This transport is accompanied by a proton transport from the peroxisomal lumen to the cytosol. Transport of ATP into the peroxisome is required for beta-oxidation of medium-chain fatty acids (By similarity).</text>
</comment>
<comment type="subcellular location">
    <subcellularLocation>
        <location evidence="1">Peroxisome membrane</location>
        <topology evidence="1">Multi-pass membrane protein</topology>
    </subcellularLocation>
</comment>
<comment type="similarity">
    <text evidence="3">Belongs to the mitochondrial carrier (TC 2.A.29) family.</text>
</comment>
<sequence length="340" mass="37170">MSFENAVIGATASSLANIAVYPLDLAKTLVQTQLKDEFVEAGEEAGEERAGSRRQNRIKPIALRSPQAAEQYKGALDALQRIYGAEGVAGLYRGLGSSTVAGFIQSFSYFFWYTLVRKHYFRLKQARGGDARFSTPEELVLGIVAAATSQLFVNPINVVATRQQTRGQAAGAADMRTVAREVHAENGWRGFWAGLKVSLVLTVNPSITYATYERLREALFPTPAAASHLVDSAALLSPGQNFVMGVLSKIVSTVLTQPLIIAKASLQRSGSCFQDFHQVLHHLYSTEGPLSLWKGLGPQITKGVLVQGLLFMFKGELTKMLRKLMFYLALLRSSRRALKG</sequence>
<feature type="chain" id="PRO_0000227602" description="Peroxisomal adenine nucleotide transporter 1">
    <location>
        <begin position="1"/>
        <end position="340"/>
    </location>
</feature>
<feature type="transmembrane region" description="Helical; Name=1" evidence="2">
    <location>
        <begin position="6"/>
        <end position="26"/>
    </location>
</feature>
<feature type="transmembrane region" description="Helical; Name=2" evidence="2">
    <location>
        <begin position="96"/>
        <end position="116"/>
    </location>
</feature>
<feature type="transmembrane region" description="Helical; Name=3" evidence="2">
    <location>
        <begin position="139"/>
        <end position="159"/>
    </location>
</feature>
<feature type="transmembrane region" description="Helical; Name=4" evidence="2">
    <location>
        <begin position="190"/>
        <end position="210"/>
    </location>
</feature>
<feature type="transmembrane region" description="Helical; Name=5" evidence="2">
    <location>
        <begin position="242"/>
        <end position="262"/>
    </location>
</feature>
<feature type="transmembrane region" description="Helical; Name=6" evidence="2">
    <location>
        <begin position="293"/>
        <end position="313"/>
    </location>
</feature>
<feature type="repeat" description="Solcar 1">
    <location>
        <begin position="4"/>
        <end position="119"/>
    </location>
</feature>
<feature type="repeat" description="Solcar 2">
    <location>
        <begin position="133"/>
        <end position="218"/>
    </location>
</feature>
<feature type="repeat" description="Solcar 3">
    <location>
        <begin position="236"/>
        <end position="320"/>
    </location>
</feature>
<keyword id="KW-0375">Hydrogen ion transport</keyword>
<keyword id="KW-0406">Ion transport</keyword>
<keyword id="KW-0472">Membrane</keyword>
<keyword id="KW-0576">Peroxisome</keyword>
<keyword id="KW-1185">Reference proteome</keyword>
<keyword id="KW-0677">Repeat</keyword>
<keyword id="KW-0812">Transmembrane</keyword>
<keyword id="KW-1133">Transmembrane helix</keyword>
<keyword id="KW-0813">Transport</keyword>
<organism>
    <name type="scientific">Eremothecium gossypii (strain ATCC 10895 / CBS 109.51 / FGSC 9923 / NRRL Y-1056)</name>
    <name type="common">Yeast</name>
    <name type="synonym">Ashbya gossypii</name>
    <dbReference type="NCBI Taxonomy" id="284811"/>
    <lineage>
        <taxon>Eukaryota</taxon>
        <taxon>Fungi</taxon>
        <taxon>Dikarya</taxon>
        <taxon>Ascomycota</taxon>
        <taxon>Saccharomycotina</taxon>
        <taxon>Saccharomycetes</taxon>
        <taxon>Saccharomycetales</taxon>
        <taxon>Saccharomycetaceae</taxon>
        <taxon>Eremothecium</taxon>
    </lineage>
</organism>
<proteinExistence type="inferred from homology"/>
<protein>
    <recommendedName>
        <fullName>Peroxisomal adenine nucleotide transporter 1</fullName>
    </recommendedName>
</protein>
<evidence type="ECO:0000250" key="1"/>
<evidence type="ECO:0000255" key="2"/>
<evidence type="ECO:0000305" key="3"/>